<protein>
    <recommendedName>
        <fullName evidence="1">Large ribosomal subunit protein bL17</fullName>
    </recommendedName>
    <alternativeName>
        <fullName evidence="2">50S ribosomal protein L17</fullName>
    </alternativeName>
</protein>
<gene>
    <name evidence="1" type="primary">rplQ</name>
    <name type="ordered locus">YPTS_3864</name>
</gene>
<feature type="chain" id="PRO_1000144511" description="Large ribosomal subunit protein bL17">
    <location>
        <begin position="1"/>
        <end position="129"/>
    </location>
</feature>
<keyword id="KW-0687">Ribonucleoprotein</keyword>
<keyword id="KW-0689">Ribosomal protein</keyword>
<reference key="1">
    <citation type="submission" date="2008-04" db="EMBL/GenBank/DDBJ databases">
        <title>Complete sequence of Yersinia pseudotuberculosis PB1/+.</title>
        <authorList>
            <person name="Copeland A."/>
            <person name="Lucas S."/>
            <person name="Lapidus A."/>
            <person name="Glavina del Rio T."/>
            <person name="Dalin E."/>
            <person name="Tice H."/>
            <person name="Bruce D."/>
            <person name="Goodwin L."/>
            <person name="Pitluck S."/>
            <person name="Munk A.C."/>
            <person name="Brettin T."/>
            <person name="Detter J.C."/>
            <person name="Han C."/>
            <person name="Tapia R."/>
            <person name="Schmutz J."/>
            <person name="Larimer F."/>
            <person name="Land M."/>
            <person name="Hauser L."/>
            <person name="Challacombe J.F."/>
            <person name="Green L."/>
            <person name="Lindler L.E."/>
            <person name="Nikolich M.P."/>
            <person name="Richardson P."/>
        </authorList>
    </citation>
    <scope>NUCLEOTIDE SEQUENCE [LARGE SCALE GENOMIC DNA]</scope>
    <source>
        <strain>PB1/+</strain>
    </source>
</reference>
<evidence type="ECO:0000255" key="1">
    <source>
        <dbReference type="HAMAP-Rule" id="MF_01368"/>
    </source>
</evidence>
<evidence type="ECO:0000305" key="2"/>
<proteinExistence type="inferred from homology"/>
<comment type="subunit">
    <text evidence="1">Part of the 50S ribosomal subunit. Contacts protein L32.</text>
</comment>
<comment type="similarity">
    <text evidence="1">Belongs to the bacterial ribosomal protein bL17 family.</text>
</comment>
<sequence length="129" mass="14532">MRHRKSGRQLNRNSSHRQAMFRNMAGSLVRHEIIKTTLPKAKELRRVVEPLITLAKTDNVANRRLAFARTRDNEIVAKLFNELGPRFASRAGGYTRILKCGFRAGDNAPMAYIELVDRAASQAEVVAAE</sequence>
<dbReference type="EMBL" id="CP001048">
    <property type="protein sequence ID" value="ACC90813.1"/>
    <property type="molecule type" value="Genomic_DNA"/>
</dbReference>
<dbReference type="RefSeq" id="WP_002209014.1">
    <property type="nucleotide sequence ID" value="NZ_CP009780.1"/>
</dbReference>
<dbReference type="SMR" id="B2K511"/>
<dbReference type="GeneID" id="57974369"/>
<dbReference type="KEGG" id="ypb:YPTS_3864"/>
<dbReference type="PATRIC" id="fig|502801.10.peg.3329"/>
<dbReference type="GO" id="GO:0022625">
    <property type="term" value="C:cytosolic large ribosomal subunit"/>
    <property type="evidence" value="ECO:0007669"/>
    <property type="project" value="TreeGrafter"/>
</dbReference>
<dbReference type="GO" id="GO:0003735">
    <property type="term" value="F:structural constituent of ribosome"/>
    <property type="evidence" value="ECO:0007669"/>
    <property type="project" value="InterPro"/>
</dbReference>
<dbReference type="GO" id="GO:0006412">
    <property type="term" value="P:translation"/>
    <property type="evidence" value="ECO:0007669"/>
    <property type="project" value="UniProtKB-UniRule"/>
</dbReference>
<dbReference type="FunFam" id="3.90.1030.10:FF:000001">
    <property type="entry name" value="50S ribosomal protein L17"/>
    <property type="match status" value="1"/>
</dbReference>
<dbReference type="Gene3D" id="3.90.1030.10">
    <property type="entry name" value="Ribosomal protein L17"/>
    <property type="match status" value="1"/>
</dbReference>
<dbReference type="HAMAP" id="MF_01368">
    <property type="entry name" value="Ribosomal_bL17"/>
    <property type="match status" value="1"/>
</dbReference>
<dbReference type="InterPro" id="IPR000456">
    <property type="entry name" value="Ribosomal_bL17"/>
</dbReference>
<dbReference type="InterPro" id="IPR047859">
    <property type="entry name" value="Ribosomal_bL17_CS"/>
</dbReference>
<dbReference type="InterPro" id="IPR036373">
    <property type="entry name" value="Ribosomal_bL17_sf"/>
</dbReference>
<dbReference type="NCBIfam" id="TIGR00059">
    <property type="entry name" value="L17"/>
    <property type="match status" value="1"/>
</dbReference>
<dbReference type="PANTHER" id="PTHR14413:SF16">
    <property type="entry name" value="LARGE RIBOSOMAL SUBUNIT PROTEIN BL17M"/>
    <property type="match status" value="1"/>
</dbReference>
<dbReference type="PANTHER" id="PTHR14413">
    <property type="entry name" value="RIBOSOMAL PROTEIN L17"/>
    <property type="match status" value="1"/>
</dbReference>
<dbReference type="Pfam" id="PF01196">
    <property type="entry name" value="Ribosomal_L17"/>
    <property type="match status" value="1"/>
</dbReference>
<dbReference type="SUPFAM" id="SSF64263">
    <property type="entry name" value="Prokaryotic ribosomal protein L17"/>
    <property type="match status" value="1"/>
</dbReference>
<dbReference type="PROSITE" id="PS01167">
    <property type="entry name" value="RIBOSOMAL_L17"/>
    <property type="match status" value="1"/>
</dbReference>
<accession>B2K511</accession>
<name>RL17_YERPB</name>
<organism>
    <name type="scientific">Yersinia pseudotuberculosis serotype IB (strain PB1/+)</name>
    <dbReference type="NCBI Taxonomy" id="502801"/>
    <lineage>
        <taxon>Bacteria</taxon>
        <taxon>Pseudomonadati</taxon>
        <taxon>Pseudomonadota</taxon>
        <taxon>Gammaproteobacteria</taxon>
        <taxon>Enterobacterales</taxon>
        <taxon>Yersiniaceae</taxon>
        <taxon>Yersinia</taxon>
    </lineage>
</organism>